<name>LEPA_STAES</name>
<gene>
    <name evidence="1" type="primary">lepA</name>
    <name type="ordered locus">SE_1271</name>
</gene>
<feature type="chain" id="PRO_0000176346" description="Elongation factor 4">
    <location>
        <begin position="1"/>
        <end position="607"/>
    </location>
</feature>
<feature type="domain" description="tr-type G">
    <location>
        <begin position="11"/>
        <end position="193"/>
    </location>
</feature>
<feature type="binding site" evidence="1">
    <location>
        <begin position="23"/>
        <end position="28"/>
    </location>
    <ligand>
        <name>GTP</name>
        <dbReference type="ChEBI" id="CHEBI:37565"/>
    </ligand>
</feature>
<feature type="binding site" evidence="1">
    <location>
        <begin position="140"/>
        <end position="143"/>
    </location>
    <ligand>
        <name>GTP</name>
        <dbReference type="ChEBI" id="CHEBI:37565"/>
    </ligand>
</feature>
<protein>
    <recommendedName>
        <fullName evidence="1">Elongation factor 4</fullName>
        <shortName evidence="1">EF-4</shortName>
        <ecNumber evidence="1">3.6.5.n1</ecNumber>
    </recommendedName>
    <alternativeName>
        <fullName evidence="1">Ribosomal back-translocase LepA</fullName>
    </alternativeName>
</protein>
<evidence type="ECO:0000255" key="1">
    <source>
        <dbReference type="HAMAP-Rule" id="MF_00071"/>
    </source>
</evidence>
<comment type="function">
    <text evidence="1">Required for accurate and efficient protein synthesis under certain stress conditions. May act as a fidelity factor of the translation reaction, by catalyzing a one-codon backward translocation of tRNAs on improperly translocated ribosomes. Back-translocation proceeds from a post-translocation (POST) complex to a pre-translocation (PRE) complex, thus giving elongation factor G a second chance to translocate the tRNAs correctly. Binds to ribosomes in a GTP-dependent manner.</text>
</comment>
<comment type="catalytic activity">
    <reaction evidence="1">
        <text>GTP + H2O = GDP + phosphate + H(+)</text>
        <dbReference type="Rhea" id="RHEA:19669"/>
        <dbReference type="ChEBI" id="CHEBI:15377"/>
        <dbReference type="ChEBI" id="CHEBI:15378"/>
        <dbReference type="ChEBI" id="CHEBI:37565"/>
        <dbReference type="ChEBI" id="CHEBI:43474"/>
        <dbReference type="ChEBI" id="CHEBI:58189"/>
        <dbReference type="EC" id="3.6.5.n1"/>
    </reaction>
</comment>
<comment type="subcellular location">
    <subcellularLocation>
        <location evidence="1">Cell membrane</location>
        <topology evidence="1">Peripheral membrane protein</topology>
        <orientation evidence="1">Cytoplasmic side</orientation>
    </subcellularLocation>
</comment>
<comment type="similarity">
    <text evidence="1">Belongs to the TRAFAC class translation factor GTPase superfamily. Classic translation factor GTPase family. LepA subfamily.</text>
</comment>
<proteinExistence type="inferred from homology"/>
<keyword id="KW-1003">Cell membrane</keyword>
<keyword id="KW-0342">GTP-binding</keyword>
<keyword id="KW-0378">Hydrolase</keyword>
<keyword id="KW-0472">Membrane</keyword>
<keyword id="KW-0547">Nucleotide-binding</keyword>
<keyword id="KW-0648">Protein biosynthesis</keyword>
<reference key="1">
    <citation type="journal article" date="2003" name="Mol. Microbiol.">
        <title>Genome-based analysis of virulence genes in a non-biofilm-forming Staphylococcus epidermidis strain (ATCC 12228).</title>
        <authorList>
            <person name="Zhang Y.-Q."/>
            <person name="Ren S.-X."/>
            <person name="Li H.-L."/>
            <person name="Wang Y.-X."/>
            <person name="Fu G."/>
            <person name="Yang J."/>
            <person name="Qin Z.-Q."/>
            <person name="Miao Y.-G."/>
            <person name="Wang W.-Y."/>
            <person name="Chen R.-S."/>
            <person name="Shen Y."/>
            <person name="Chen Z."/>
            <person name="Yuan Z.-H."/>
            <person name="Zhao G.-P."/>
            <person name="Qu D."/>
            <person name="Danchin A."/>
            <person name="Wen Y.-M."/>
        </authorList>
    </citation>
    <scope>NUCLEOTIDE SEQUENCE [LARGE SCALE GENOMIC DNA]</scope>
    <source>
        <strain>ATCC 12228 / FDA PCI 1200</strain>
    </source>
</reference>
<sequence>MDKQERYNRRENIRNFSIIAHIDHGKSTLADRILENTKSVETREMQDQLLDSMDLERERGITIKLNAVRLKYEAKDGETYTFHLIDTPGHVDFTYEVSRSLAACEGAILVVDAAQGIEAQTLANVYLALDNDLELLPVVNKIDLPAAEPDRVKQELEDVIGIDQEDVVLASAKSNIGIEEILEKIVDVVPAPDGDPEAPLKALIFDSEYDPYRGVISSIRIIDGVVKAGDRIKMMATGKEFEVTEVGINTPKQLPVEELTVGDVGYIIASIKNVDDSRVGDTITLAERPADKPLQGYKKMNPMVFCGLFPIDNKDYNDLREALEKLQLNDASLEFEPESSQALGFGYRTGFLGMLHMEIIQERIEREFGIELIATAPSVIYQCILKDGSEVSVDNPAQMPERDKIEHIYEPFVKATMMVPNDYVGAVMELCQRKRGQFINMDYLDDIRVNIVYEIPLSEVVFDFFDQLKSNTKGYASFDYEFIENKESNLVKMDILLNGDKVDALSFIVHRDFAYERGKALVEKLKTLIPRQQFEVPVQAAIGQKIVARTNIKSMGKNVLSKCYGGDISRKRKLLEKQKAGKAKMKAVGNVEIPQDAFLAVLKMDDE</sequence>
<accession>Q8CP13</accession>
<dbReference type="EC" id="3.6.5.n1" evidence="1"/>
<dbReference type="EMBL" id="AE015929">
    <property type="protein sequence ID" value="AAO04870.1"/>
    <property type="molecule type" value="Genomic_DNA"/>
</dbReference>
<dbReference type="RefSeq" id="NP_764826.1">
    <property type="nucleotide sequence ID" value="NC_004461.1"/>
</dbReference>
<dbReference type="RefSeq" id="WP_001831284.1">
    <property type="nucleotide sequence ID" value="NZ_WBME01000008.1"/>
</dbReference>
<dbReference type="SMR" id="Q8CP13"/>
<dbReference type="GeneID" id="50018613"/>
<dbReference type="KEGG" id="sep:SE_1271"/>
<dbReference type="PATRIC" id="fig|176280.10.peg.1240"/>
<dbReference type="eggNOG" id="COG0481">
    <property type="taxonomic scope" value="Bacteria"/>
</dbReference>
<dbReference type="HOGENOM" id="CLU_009995_3_3_9"/>
<dbReference type="OrthoDB" id="9804431at2"/>
<dbReference type="Proteomes" id="UP000001411">
    <property type="component" value="Chromosome"/>
</dbReference>
<dbReference type="GO" id="GO:0005886">
    <property type="term" value="C:plasma membrane"/>
    <property type="evidence" value="ECO:0007669"/>
    <property type="project" value="UniProtKB-SubCell"/>
</dbReference>
<dbReference type="GO" id="GO:0005525">
    <property type="term" value="F:GTP binding"/>
    <property type="evidence" value="ECO:0007669"/>
    <property type="project" value="UniProtKB-UniRule"/>
</dbReference>
<dbReference type="GO" id="GO:0003924">
    <property type="term" value="F:GTPase activity"/>
    <property type="evidence" value="ECO:0007669"/>
    <property type="project" value="UniProtKB-UniRule"/>
</dbReference>
<dbReference type="GO" id="GO:0043022">
    <property type="term" value="F:ribosome binding"/>
    <property type="evidence" value="ECO:0007669"/>
    <property type="project" value="UniProtKB-UniRule"/>
</dbReference>
<dbReference type="GO" id="GO:0003746">
    <property type="term" value="F:translation elongation factor activity"/>
    <property type="evidence" value="ECO:0007669"/>
    <property type="project" value="UniProtKB-UniRule"/>
</dbReference>
<dbReference type="GO" id="GO:0045727">
    <property type="term" value="P:positive regulation of translation"/>
    <property type="evidence" value="ECO:0007669"/>
    <property type="project" value="UniProtKB-UniRule"/>
</dbReference>
<dbReference type="CDD" id="cd03699">
    <property type="entry name" value="EF4_II"/>
    <property type="match status" value="1"/>
</dbReference>
<dbReference type="CDD" id="cd16260">
    <property type="entry name" value="EF4_III"/>
    <property type="match status" value="1"/>
</dbReference>
<dbReference type="CDD" id="cd01890">
    <property type="entry name" value="LepA"/>
    <property type="match status" value="1"/>
</dbReference>
<dbReference type="CDD" id="cd03709">
    <property type="entry name" value="lepA_C"/>
    <property type="match status" value="1"/>
</dbReference>
<dbReference type="FunFam" id="3.40.50.300:FF:000078">
    <property type="entry name" value="Elongation factor 4"/>
    <property type="match status" value="1"/>
</dbReference>
<dbReference type="FunFam" id="2.40.30.10:FF:000015">
    <property type="entry name" value="Translation factor GUF1, mitochondrial"/>
    <property type="match status" value="1"/>
</dbReference>
<dbReference type="FunFam" id="3.30.70.240:FF:000007">
    <property type="entry name" value="Translation factor GUF1, mitochondrial"/>
    <property type="match status" value="1"/>
</dbReference>
<dbReference type="FunFam" id="3.30.70.2570:FF:000001">
    <property type="entry name" value="Translation factor GUF1, mitochondrial"/>
    <property type="match status" value="1"/>
</dbReference>
<dbReference type="FunFam" id="3.30.70.870:FF:000004">
    <property type="entry name" value="Translation factor GUF1, mitochondrial"/>
    <property type="match status" value="1"/>
</dbReference>
<dbReference type="Gene3D" id="3.30.70.240">
    <property type="match status" value="1"/>
</dbReference>
<dbReference type="Gene3D" id="3.30.70.2570">
    <property type="entry name" value="Elongation factor 4, C-terminal domain"/>
    <property type="match status" value="1"/>
</dbReference>
<dbReference type="Gene3D" id="3.30.70.870">
    <property type="entry name" value="Elongation Factor G (Translational Gtpase), domain 3"/>
    <property type="match status" value="1"/>
</dbReference>
<dbReference type="Gene3D" id="3.40.50.300">
    <property type="entry name" value="P-loop containing nucleotide triphosphate hydrolases"/>
    <property type="match status" value="1"/>
</dbReference>
<dbReference type="Gene3D" id="2.40.30.10">
    <property type="entry name" value="Translation factors"/>
    <property type="match status" value="1"/>
</dbReference>
<dbReference type="HAMAP" id="MF_00071">
    <property type="entry name" value="LepA"/>
    <property type="match status" value="1"/>
</dbReference>
<dbReference type="InterPro" id="IPR006297">
    <property type="entry name" value="EF-4"/>
</dbReference>
<dbReference type="InterPro" id="IPR041095">
    <property type="entry name" value="EFG_II"/>
</dbReference>
<dbReference type="InterPro" id="IPR035647">
    <property type="entry name" value="EFG_III/V"/>
</dbReference>
<dbReference type="InterPro" id="IPR000640">
    <property type="entry name" value="EFG_V-like"/>
</dbReference>
<dbReference type="InterPro" id="IPR004161">
    <property type="entry name" value="EFTu-like_2"/>
</dbReference>
<dbReference type="InterPro" id="IPR031157">
    <property type="entry name" value="G_TR_CS"/>
</dbReference>
<dbReference type="InterPro" id="IPR038363">
    <property type="entry name" value="LepA_C_sf"/>
</dbReference>
<dbReference type="InterPro" id="IPR013842">
    <property type="entry name" value="LepA_CTD"/>
</dbReference>
<dbReference type="InterPro" id="IPR035654">
    <property type="entry name" value="LepA_IV"/>
</dbReference>
<dbReference type="InterPro" id="IPR027417">
    <property type="entry name" value="P-loop_NTPase"/>
</dbReference>
<dbReference type="InterPro" id="IPR005225">
    <property type="entry name" value="Small_GTP-bd"/>
</dbReference>
<dbReference type="InterPro" id="IPR000795">
    <property type="entry name" value="T_Tr_GTP-bd_dom"/>
</dbReference>
<dbReference type="NCBIfam" id="TIGR01393">
    <property type="entry name" value="lepA"/>
    <property type="match status" value="1"/>
</dbReference>
<dbReference type="NCBIfam" id="TIGR00231">
    <property type="entry name" value="small_GTP"/>
    <property type="match status" value="1"/>
</dbReference>
<dbReference type="PANTHER" id="PTHR43512:SF4">
    <property type="entry name" value="TRANSLATION FACTOR GUF1 HOMOLOG, CHLOROPLASTIC"/>
    <property type="match status" value="1"/>
</dbReference>
<dbReference type="PANTHER" id="PTHR43512">
    <property type="entry name" value="TRANSLATION FACTOR GUF1-RELATED"/>
    <property type="match status" value="1"/>
</dbReference>
<dbReference type="Pfam" id="PF00679">
    <property type="entry name" value="EFG_C"/>
    <property type="match status" value="1"/>
</dbReference>
<dbReference type="Pfam" id="PF14492">
    <property type="entry name" value="EFG_III"/>
    <property type="match status" value="1"/>
</dbReference>
<dbReference type="Pfam" id="PF00009">
    <property type="entry name" value="GTP_EFTU"/>
    <property type="match status" value="1"/>
</dbReference>
<dbReference type="Pfam" id="PF03144">
    <property type="entry name" value="GTP_EFTU_D2"/>
    <property type="match status" value="1"/>
</dbReference>
<dbReference type="Pfam" id="PF06421">
    <property type="entry name" value="LepA_C"/>
    <property type="match status" value="1"/>
</dbReference>
<dbReference type="PRINTS" id="PR00315">
    <property type="entry name" value="ELONGATNFCT"/>
</dbReference>
<dbReference type="SMART" id="SM00838">
    <property type="entry name" value="EFG_C"/>
    <property type="match status" value="1"/>
</dbReference>
<dbReference type="SUPFAM" id="SSF54980">
    <property type="entry name" value="EF-G C-terminal domain-like"/>
    <property type="match status" value="2"/>
</dbReference>
<dbReference type="SUPFAM" id="SSF52540">
    <property type="entry name" value="P-loop containing nucleoside triphosphate hydrolases"/>
    <property type="match status" value="1"/>
</dbReference>
<dbReference type="PROSITE" id="PS00301">
    <property type="entry name" value="G_TR_1"/>
    <property type="match status" value="1"/>
</dbReference>
<dbReference type="PROSITE" id="PS51722">
    <property type="entry name" value="G_TR_2"/>
    <property type="match status" value="1"/>
</dbReference>
<organism>
    <name type="scientific">Staphylococcus epidermidis (strain ATCC 12228 / FDA PCI 1200)</name>
    <dbReference type="NCBI Taxonomy" id="176280"/>
    <lineage>
        <taxon>Bacteria</taxon>
        <taxon>Bacillati</taxon>
        <taxon>Bacillota</taxon>
        <taxon>Bacilli</taxon>
        <taxon>Bacillales</taxon>
        <taxon>Staphylococcaceae</taxon>
        <taxon>Staphylococcus</taxon>
    </lineage>
</organism>